<accession>Q92JL9</accession>
<protein>
    <recommendedName>
        <fullName>Uncharacterized protein RC0048</fullName>
    </recommendedName>
</protein>
<organism>
    <name type="scientific">Rickettsia conorii (strain ATCC VR-613 / Malish 7)</name>
    <dbReference type="NCBI Taxonomy" id="272944"/>
    <lineage>
        <taxon>Bacteria</taxon>
        <taxon>Pseudomonadati</taxon>
        <taxon>Pseudomonadota</taxon>
        <taxon>Alphaproteobacteria</taxon>
        <taxon>Rickettsiales</taxon>
        <taxon>Rickettsiaceae</taxon>
        <taxon>Rickettsieae</taxon>
        <taxon>Rickettsia</taxon>
        <taxon>spotted fever group</taxon>
    </lineage>
</organism>
<reference key="1">
    <citation type="journal article" date="2001" name="Science">
        <title>Mechanisms of evolution in Rickettsia conorii and R. prowazekii.</title>
        <authorList>
            <person name="Ogata H."/>
            <person name="Audic S."/>
            <person name="Renesto-Audiffren P."/>
            <person name="Fournier P.-E."/>
            <person name="Barbe V."/>
            <person name="Samson D."/>
            <person name="Roux V."/>
            <person name="Cossart P."/>
            <person name="Weissenbach J."/>
            <person name="Claverie J.-M."/>
            <person name="Raoult D."/>
        </authorList>
    </citation>
    <scope>NUCLEOTIDE SEQUENCE [LARGE SCALE GENOMIC DNA]</scope>
    <source>
        <strain>ATCC VR-613 / Malish 7</strain>
    </source>
</reference>
<name>Y048_RICCN</name>
<feature type="chain" id="PRO_0000101305" description="Uncharacterized protein RC0048">
    <location>
        <begin position="1"/>
        <end position="440"/>
    </location>
</feature>
<gene>
    <name type="ordered locus">RC0048</name>
</gene>
<proteinExistence type="predicted"/>
<dbReference type="EMBL" id="AE006914">
    <property type="protein sequence ID" value="AAL02586.1"/>
    <property type="molecule type" value="Genomic_DNA"/>
</dbReference>
<dbReference type="PIR" id="H97705">
    <property type="entry name" value="H97705"/>
</dbReference>
<dbReference type="RefSeq" id="WP_010976735.1">
    <property type="nucleotide sequence ID" value="NC_003103.1"/>
</dbReference>
<dbReference type="KEGG" id="rco:RC0048"/>
<dbReference type="HOGENOM" id="CLU_622379_0_0_5"/>
<dbReference type="Proteomes" id="UP000000816">
    <property type="component" value="Chromosome"/>
</dbReference>
<dbReference type="InterPro" id="IPR020183">
    <property type="entry name" value="Uncharacterised_RC0048"/>
</dbReference>
<dbReference type="Pfam" id="PF10871">
    <property type="entry name" value="DUF2748"/>
    <property type="match status" value="1"/>
</dbReference>
<sequence length="440" mass="50596">MTSIYHILDRVPAIYKQDMEIEYEHLAMQLIKSGKLRIDTDDCCNFARFTEPALNISLMVSQEELTSPHLIPETTKLFQNLYKNSASDQKIKSIFDNLKKQIQKLQPVKKEVTEMLARIFVQSAHPIVIRWLLLNKTEVFLTYSHNIGDMMDMVSWQRVGGNSGMQSTNGKDVAIFVSCGGNPFAENNKDHPTYGNGFAAAARLQIIAAQELGHFADIKRDDKGRQITRHSANFSGTKATDKVRIARKNDIIHCHNLLSKLLKAGMKKQLDYETKLKFYNANKVSGLKVYAIKFMIFIYKFQLLNYSSRNNLIFVRKFKTDEYMALMIDAMFKDMQANLSPAADVYKNKNPEIEEAIACIEALARVPQQTVKWGYLTTKETMHDLYKIYYNEVIPSLITSYNAITGENYQRDFKKPKSNFFSKINIFSNKKLVLKPVREL</sequence>